<sequence length="1312" mass="152569">MSAIYKLSIQGIRSFDSNDRETIEFGKPLTLIVGMNGSGKTTIIECLKYATTGDLPPNSKGGVFIHDPKITGEKDIRAQVKLAFTSANGLNMIVTRNIQLLMKKTTTTFKTLEGQLVAINNSGDRSTLSTRSLELDAQVPLYLGVPKAILEYVIFCHQEDSLWPLSEPSNLKKKFDEIFQAMKFTKALDNLKSIKKDMSVDIKLLKQSVEHLKLDKDRSKAMKLNIHQLQTKIDQYNEEVSEIESQLNEITEKSDKLFKSNQDFQKILSKVENLKNTKLSISDQVKRLSNSIDILDLSKPDLQNLLANFSKVLMDKNNQLRDLETDISSLKDRQSSLQSLSNSLIRRQGELEAGKETYEKNRNHLSSLKEAFQHKFQGLSNIENSDMAQVNHEMSQFKAFISQDLTDTIDQFAKDIQLKETNLSDLIKSITVDSQNLEYNKKDRSKLIHDSEELAEKLKSFKSLSTQDSLNHELENLKTYKEKLQSWESENIIPKLNQKIEEKNNEMIILENQIEKFQDRIMKTNQQADLYAKLGLIKKSINTKLDELQKITEKLQNDSRIRQVFPLTQEFQRADLEMDFQKLFINMQKNIAINNKKMHELDRRYTNALYNLNTIEKDLQDNQKSKEKVIQLLSENLPEDCTIDEYNDVLEETELSYKTALENLKMHQTTLEFNRKALEIAERDSCCYLCSRKFENESFKSKLLQELKTKTDANFEKTLKDTVQNEKEYLHSLRLLEKHIITLNSINEKIDNSQKCLEKAKEETKTSKSKLDELEVDSTKLKDEKELAESEIRPLIEKFTYLEKELKDLENSSKTISEELSIYNTSEDGIQTVDELRDQQRKMNDSLRELRKTISDLQMEKDEKVRENSRMINLIKEKELTVSEIESSLTQKQNIDDSIRSKRENINDIDSRVKELEARIISLKNKKDEAQSVLDKVKNERDIQVRNKQKTVADINRLIDRFQTIYNEVVDFEAKGFDELQTTIKELELNKAQMLELKEQLDLKSNEVNEEKRKLADSNNEEKNLKQNLELIELKSQLQHIESEISRLDVQNAEAERDKYQEESLRLRTRFEKLSSENAGKLGEMKQLQNQIDSLTHQLRTDYKDIEKNYHKEWVELQTRSFVTDDIDVYSKALDSAIMKYHGLKMQDINRIIDELWKRTYSGTDIDTIKIRSDEVSSTVKGKSYNYRVVMYKQDVELDMRGRCSAGQKVLASIIIRLALSETFGANCGVIALDEPTTNLDEENIESLAKSLHNIINMRRHQKNFQLIVITHDEKFLGHMNAAAFTDHFFKVKRDDRQKSQIEWVDINRVTY</sequence>
<organism>
    <name type="scientific">Saccharomyces cerevisiae (strain ATCC 204508 / S288c)</name>
    <name type="common">Baker's yeast</name>
    <dbReference type="NCBI Taxonomy" id="559292"/>
    <lineage>
        <taxon>Eukaryota</taxon>
        <taxon>Fungi</taxon>
        <taxon>Dikarya</taxon>
        <taxon>Ascomycota</taxon>
        <taxon>Saccharomycotina</taxon>
        <taxon>Saccharomycetes</taxon>
        <taxon>Saccharomycetales</taxon>
        <taxon>Saccharomycetaceae</taxon>
        <taxon>Saccharomyces</taxon>
    </lineage>
</organism>
<accession>P12753</accession>
<accession>D6W0U3</accession>
<reference key="1">
    <citation type="journal article" date="1989" name="Genetics">
        <title>The yeast RAD50 gene encodes a predicted 153-kD protein containing a purine nucleotide-binding domain and two large heptad-repeat regions.</title>
        <authorList>
            <person name="Alani E."/>
            <person name="Subbiah S."/>
            <person name="Kleckner N."/>
        </authorList>
    </citation>
    <scope>NUCLEOTIDE SEQUENCE [GENOMIC DNA]</scope>
    <source>
        <strain>RE821</strain>
    </source>
</reference>
<reference key="2">
    <citation type="journal article" date="1997" name="Yeast">
        <title>Sequence analysis of the 33 kb long region between ORC5 and SUI1 from the left arm of chromosome XIV from Saccharomyces cerevisiae.</title>
        <authorList>
            <person name="Sen-Gupta M."/>
            <person name="Gueldener U."/>
            <person name="Beinhauer J.D."/>
            <person name="Fiedler T.A."/>
            <person name="Hegemann J.H."/>
        </authorList>
    </citation>
    <scope>NUCLEOTIDE SEQUENCE [GENOMIC DNA]</scope>
    <source>
        <strain>ATCC 96604 / S288c / FY1679</strain>
    </source>
</reference>
<reference key="3">
    <citation type="journal article" date="1997" name="Nature">
        <title>The nucleotide sequence of Saccharomyces cerevisiae chromosome XIV and its evolutionary implications.</title>
        <authorList>
            <person name="Philippsen P."/>
            <person name="Kleine K."/>
            <person name="Poehlmann R."/>
            <person name="Duesterhoeft A."/>
            <person name="Hamberg K."/>
            <person name="Hegemann J.H."/>
            <person name="Obermaier B."/>
            <person name="Urrestarazu L.A."/>
            <person name="Aert R."/>
            <person name="Albermann K."/>
            <person name="Altmann R."/>
            <person name="Andre B."/>
            <person name="Baladron V."/>
            <person name="Ballesta J.P.G."/>
            <person name="Becam A.-M."/>
            <person name="Beinhauer J.D."/>
            <person name="Boskovic J."/>
            <person name="Buitrago M.J."/>
            <person name="Bussereau F."/>
            <person name="Coster F."/>
            <person name="Crouzet M."/>
            <person name="D'Angelo M."/>
            <person name="Dal Pero F."/>
            <person name="De Antoni A."/>
            <person name="del Rey F."/>
            <person name="Doignon F."/>
            <person name="Domdey H."/>
            <person name="Dubois E."/>
            <person name="Fiedler T.A."/>
            <person name="Fleig U."/>
            <person name="Floeth M."/>
            <person name="Fritz C."/>
            <person name="Gaillardin C."/>
            <person name="Garcia-Cantalejo J.M."/>
            <person name="Glansdorff N."/>
            <person name="Goffeau A."/>
            <person name="Gueldener U."/>
            <person name="Herbert C.J."/>
            <person name="Heumann K."/>
            <person name="Heuss-Neitzel D."/>
            <person name="Hilbert H."/>
            <person name="Hinni K."/>
            <person name="Iraqui Houssaini I."/>
            <person name="Jacquet M."/>
            <person name="Jimenez A."/>
            <person name="Jonniaux J.-L."/>
            <person name="Karpfinger-Hartl L."/>
            <person name="Lanfranchi G."/>
            <person name="Lepingle A."/>
            <person name="Levesque H."/>
            <person name="Lyck R."/>
            <person name="Maftahi M."/>
            <person name="Mallet L."/>
            <person name="Maurer C.T.C."/>
            <person name="Messenguy F."/>
            <person name="Mewes H.-W."/>
            <person name="Moestl D."/>
            <person name="Nasr F."/>
            <person name="Nicaud J.-M."/>
            <person name="Niedenthal R.K."/>
            <person name="Pandolfo D."/>
            <person name="Pierard A."/>
            <person name="Piravandi E."/>
            <person name="Planta R.J."/>
            <person name="Pohl T.M."/>
            <person name="Purnelle B."/>
            <person name="Rebischung C."/>
            <person name="Remacha M.A."/>
            <person name="Revuelta J.L."/>
            <person name="Rinke M."/>
            <person name="Saiz J.E."/>
            <person name="Sartorello F."/>
            <person name="Scherens B."/>
            <person name="Sen-Gupta M."/>
            <person name="Soler-Mira A."/>
            <person name="Urbanus J.H.M."/>
            <person name="Valle G."/>
            <person name="Van Dyck L."/>
            <person name="Verhasselt P."/>
            <person name="Vierendeels F."/>
            <person name="Vissers S."/>
            <person name="Voet M."/>
            <person name="Volckaert G."/>
            <person name="Wach A."/>
            <person name="Wambutt R."/>
            <person name="Wedler H."/>
            <person name="Zollner A."/>
            <person name="Hani J."/>
        </authorList>
    </citation>
    <scope>NUCLEOTIDE SEQUENCE [LARGE SCALE GENOMIC DNA]</scope>
    <source>
        <strain>ATCC 204508 / S288c</strain>
    </source>
</reference>
<reference key="4">
    <citation type="journal article" date="2014" name="G3 (Bethesda)">
        <title>The reference genome sequence of Saccharomyces cerevisiae: Then and now.</title>
        <authorList>
            <person name="Engel S.R."/>
            <person name="Dietrich F.S."/>
            <person name="Fisk D.G."/>
            <person name="Binkley G."/>
            <person name="Balakrishnan R."/>
            <person name="Costanzo M.C."/>
            <person name="Dwight S.S."/>
            <person name="Hitz B.C."/>
            <person name="Karra K."/>
            <person name="Nash R.S."/>
            <person name="Weng S."/>
            <person name="Wong E.D."/>
            <person name="Lloyd P."/>
            <person name="Skrzypek M.S."/>
            <person name="Miyasato S.R."/>
            <person name="Simison M."/>
            <person name="Cherry J.M."/>
        </authorList>
    </citation>
    <scope>GENOME REANNOTATION</scope>
    <source>
        <strain>ATCC 204508 / S288c</strain>
    </source>
</reference>
<reference key="5">
    <citation type="journal article" date="1998" name="Cell">
        <title>Complex formation and functional versatility of Mre11 of budding yeast in recombination.</title>
        <authorList>
            <person name="Usui T."/>
            <person name="Ohta T."/>
            <person name="Oshiumi H."/>
            <person name="Tomizawa J."/>
            <person name="Ogawa H."/>
            <person name="Ogawa T."/>
        </authorList>
    </citation>
    <scope>IDENTIFICATION IN THE MRE11 COMPLEX</scope>
    <scope>SUBCELLULAR LOCATION</scope>
</reference>
<reference key="6">
    <citation type="journal article" date="2003" name="Nature">
        <title>Global analysis of protein expression in yeast.</title>
        <authorList>
            <person name="Ghaemmaghami S."/>
            <person name="Huh W.-K."/>
            <person name="Bower K."/>
            <person name="Howson R.W."/>
            <person name="Belle A."/>
            <person name="Dephoure N."/>
            <person name="O'Shea E.K."/>
            <person name="Weissman J.S."/>
        </authorList>
    </citation>
    <scope>LEVEL OF PROTEIN EXPRESSION [LARGE SCALE ANALYSIS]</scope>
</reference>
<reference key="7">
    <citation type="journal article" date="2008" name="Mol. Cell. Proteomics">
        <title>A multidimensional chromatography technology for in-depth phosphoproteome analysis.</title>
        <authorList>
            <person name="Albuquerque C.P."/>
            <person name="Smolka M.B."/>
            <person name="Payne S.H."/>
            <person name="Bafna V."/>
            <person name="Eng J."/>
            <person name="Zhou H."/>
        </authorList>
    </citation>
    <scope>PHOSPHORYLATION [LARGE SCALE ANALYSIS] AT SER-469 AND THR-568</scope>
    <scope>IDENTIFICATION BY MASS SPECTROMETRY [LARGE SCALE ANALYSIS]</scope>
</reference>
<reference key="8">
    <citation type="journal article" date="2012" name="Nucleic Acids Res.">
        <title>Mre11 ATLD17/18 mutation retains Tel1/ATM activity but blocks DNA double-strand break repair.</title>
        <authorList>
            <person name="Limbo O."/>
            <person name="Moiani D."/>
            <person name="Kertokalio A."/>
            <person name="Wyman C."/>
            <person name="Tainer J.A."/>
            <person name="Russell P."/>
        </authorList>
    </citation>
    <scope>INTERACTION WITH MRE11</scope>
</reference>
<reference key="9">
    <citation type="journal article" date="2016" name="EMBO J.">
        <title>Structural mechanism of ATP-dependent DNA binding and DNA end bridging by eukaryotic Rad50.</title>
        <authorList>
            <person name="Seifert F.U."/>
            <person name="Lammens K."/>
            <person name="Stoehr G."/>
            <person name="Kessler B."/>
            <person name="Hopfner K.P."/>
        </authorList>
    </citation>
    <scope>FUNCTION</scope>
    <scope>MUTAGENESIS OF LYS-60; ARG-1201 AND SER-1205</scope>
</reference>
<reference key="10">
    <citation type="journal article" date="2017" name="Nat. Struct. Mol. Biol.">
        <title>Eukaryotic Rad50 functions as a rod-shaped dimer.</title>
        <authorList>
            <person name="Park Y.B."/>
            <person name="Hohl M."/>
            <person name="Padjasek M."/>
            <person name="Jeong E."/>
            <person name="Jin K.S."/>
            <person name="Krezel A."/>
            <person name="Petrini J.H."/>
            <person name="Cho Y."/>
        </authorList>
    </citation>
    <scope>FUNCTION</scope>
    <scope>MUTAGENESIS OF 685-SER--TYR-688</scope>
</reference>
<reference key="11">
    <citation type="journal article" date="2019" name="Nat. Commun.">
        <title>MRE11-RAD50-NBS1 promotes Fanconi Anemia R-loop suppression at transcription-replication conflicts.</title>
        <authorList>
            <person name="Chang E.Y."/>
            <person name="Tsai S."/>
            <person name="Aristizabal M.J."/>
            <person name="Wells J.P."/>
            <person name="Coulombe Y."/>
            <person name="Busatto F.F."/>
            <person name="Chan Y.A."/>
            <person name="Kumar A."/>
            <person name="Dan Zhu Y."/>
            <person name="Wang A.Y."/>
            <person name="Fournier L.A."/>
            <person name="Hieter P."/>
            <person name="Kobor M.S."/>
            <person name="Masson J.Y."/>
            <person name="Stirling P.C."/>
        </authorList>
    </citation>
    <scope>FUNCTION</scope>
</reference>
<reference key="12">
    <citation type="journal article" date="2022" name="Nat. Commun.">
        <title>Mre11-Rad50 oligomerization promotes DNA double-strand break repair.</title>
        <authorList>
            <person name="Kissling V.M."/>
            <person name="Reginato G."/>
            <person name="Bianco E."/>
            <person name="Kasaciunaite K."/>
            <person name="Tilma J."/>
            <person name="Cereghetti G."/>
            <person name="Schindler N."/>
            <person name="Lee S.S."/>
            <person name="Guerois R."/>
            <person name="Luke B."/>
            <person name="Seidel R."/>
            <person name="Cejka P."/>
            <person name="Peter M."/>
        </authorList>
    </citation>
    <scope>IDENTIFICATION IN THE MRE11 COMPLEX</scope>
    <scope>SUBUNIT</scope>
</reference>
<gene>
    <name evidence="14 16" type="primary">RAD50</name>
    <name type="ordered locus">YNL250W</name>
    <name type="ORF">N0872</name>
</gene>
<comment type="function">
    <text evidence="3 4 9 10 11">Component of the MRN complex, which plays a central role in double-strand break (DSB) repair, DNA recombination, maintenance of telomere integrity and meiosis (PubMed:26896444, PubMed:28134932). The MRN complex is involved in the repair of DNA double-strand breaks (DSBs) via homologous recombination (HR), an error-free mechanism which primarily occurs during S and G2 phases (By similarity). The complex (1) mediates the end resection of damaged DNA, which generates proper single-stranded DNA, a key initial steps in HR, and is (2) required for the recruitment of other repair factors and efficient activation of TEL1/ATM and ATR upon DNA damage (PubMed:26896444, PubMed:28134932). The MRN complex possesses single-strand endonuclease activity and double-strand-specific 3'-5' exonuclease activity, which are provided by MRE11, to initiate end resection, which is required for single-strand invasion and recombination (By similarity). Within the complex, RAD50 is both required to bind DNA ends and hold them in close proximity and regulate the activity of MRE11 (PubMed:26896444). RAD50 provides an ATP-dependent control of MRE11 by positioning DNA ends into the MRE11 active site: ATP-binding induces a large structural change from an open form with accessible MRE11 nuclease sites into a closed form (By similarity). The MRN complex is also required for the processing of R-loops (PubMed:31537797).</text>
</comment>
<comment type="catalytic activity">
    <reaction evidence="3">
        <text>ATP + H2O = ADP + phosphate + H(+)</text>
        <dbReference type="Rhea" id="RHEA:13065"/>
        <dbReference type="ChEBI" id="CHEBI:15377"/>
        <dbReference type="ChEBI" id="CHEBI:15378"/>
        <dbReference type="ChEBI" id="CHEBI:30616"/>
        <dbReference type="ChEBI" id="CHEBI:43474"/>
        <dbReference type="ChEBI" id="CHEBI:456216"/>
    </reaction>
</comment>
<comment type="cofactor">
    <cofactor evidence="3">
        <name>Zn(2+)</name>
        <dbReference type="ChEBI" id="CHEBI:29105"/>
    </cofactor>
    <text evidence="3">Binds 1 zinc ion per homodimer.</text>
</comment>
<comment type="subunit">
    <text evidence="8 12 13">Component of the MRN complex composed of two heterodimers RAD50 and MRE11 associated with a single XRS2 (PubMed:23080121, PubMed:35501303, PubMed:9845372). The MRN complexes dimerize on DNA to form joined MRN-MRN oligomers required for DNA double-strand break repair (PubMed:35501303).</text>
</comment>
<comment type="interaction">
    <interactant intactId="EBI-14700">
        <id>P12753</id>
    </interactant>
    <interactant intactId="EBI-6194">
        <id>P39009</id>
        <label>DUN1</label>
    </interactant>
    <organismsDiffer>false</organismsDiffer>
    <experiments>2</experiments>
</comment>
<comment type="interaction">
    <interactant intactId="EBI-14700">
        <id>P12753</id>
    </interactant>
    <interactant intactId="EBI-11255">
        <id>P32829</id>
        <label>MRE11</label>
    </interactant>
    <organismsDiffer>false</organismsDiffer>
    <experiments>21</experiments>
</comment>
<comment type="subcellular location">
    <subcellularLocation>
        <location evidence="13">Nucleus</location>
    </subcellularLocation>
    <subcellularLocation>
        <location evidence="3">Chromosome</location>
    </subcellularLocation>
    <text evidence="3">Localizes to DNA double-strand breaks (DSBs).</text>
</comment>
<comment type="domain">
    <text evidence="2">The zinc-hook, which separates the large intramolecular coiled coil regions, contains 2 Cys residues that coordinate one molecule of zinc with the help of the 2 Cys residues of the zinc-hook of another RAD50 molecule, thereby forming a V-shaped homodimer. The two heads of the homodimer, which constitute the ATP-binding domain, interact with the MRE11 homodimer.</text>
</comment>
<comment type="miscellaneous">
    <text evidence="7">Present with 830 molecules/cell in log phase SD medium.</text>
</comment>
<comment type="similarity">
    <text evidence="15">Belongs to the SMC family. RAD50 subfamily.</text>
</comment>
<protein>
    <recommendedName>
        <fullName>DNA repair protein RAD50</fullName>
        <ecNumber evidence="3">3.6.-.-</ecNumber>
    </recommendedName>
    <alternativeName>
        <fullName>153 kDa protein</fullName>
    </alternativeName>
</protein>
<feature type="chain" id="PRO_0000138648" description="DNA repair protein RAD50">
    <location>
        <begin position="1"/>
        <end position="1312"/>
    </location>
</feature>
<feature type="domain" description="Zinc-hook" evidence="6">
    <location>
        <begin position="640"/>
        <end position="741"/>
    </location>
</feature>
<feature type="coiled-coil region" evidence="5">
    <location>
        <begin position="185"/>
        <end position="347"/>
    </location>
</feature>
<feature type="coiled-coil region" evidence="5">
    <location>
        <begin position="403"/>
        <end position="558"/>
    </location>
</feature>
<feature type="coiled-coil region" evidence="5">
    <location>
        <begin position="640"/>
        <end position="678"/>
    </location>
</feature>
<feature type="coiled-coil region" evidence="5">
    <location>
        <begin position="712"/>
        <end position="741"/>
    </location>
</feature>
<feature type="coiled-coil region" evidence="5">
    <location>
        <begin position="787"/>
        <end position="1108"/>
    </location>
</feature>
<feature type="binding site" evidence="1">
    <location>
        <position position="13"/>
    </location>
    <ligand>
        <name>ATP</name>
        <dbReference type="ChEBI" id="CHEBI:30616"/>
    </ligand>
</feature>
<feature type="binding site" evidence="1">
    <location>
        <position position="36"/>
    </location>
    <ligand>
        <name>ATP</name>
        <dbReference type="ChEBI" id="CHEBI:30616"/>
    </ligand>
</feature>
<feature type="binding site" evidence="1">
    <location>
        <position position="37"/>
    </location>
    <ligand>
        <name>ATP</name>
        <dbReference type="ChEBI" id="CHEBI:30616"/>
    </ligand>
</feature>
<feature type="binding site" evidence="1">
    <location>
        <position position="39"/>
    </location>
    <ligand>
        <name>ATP</name>
        <dbReference type="ChEBI" id="CHEBI:30616"/>
    </ligand>
</feature>
<feature type="binding site" evidence="1">
    <location>
        <position position="40"/>
    </location>
    <ligand>
        <name>ATP</name>
        <dbReference type="ChEBI" id="CHEBI:30616"/>
    </ligand>
</feature>
<feature type="binding site" evidence="1">
    <location>
        <position position="41"/>
    </location>
    <ligand>
        <name>ATP</name>
        <dbReference type="ChEBI" id="CHEBI:30616"/>
    </ligand>
</feature>
<feature type="binding site" evidence="1">
    <location>
        <position position="41"/>
    </location>
    <ligand>
        <name>Mg(2+)</name>
        <dbReference type="ChEBI" id="CHEBI:18420"/>
    </ligand>
</feature>
<feature type="binding site" evidence="1">
    <location>
        <position position="42"/>
    </location>
    <ligand>
        <name>ATP</name>
        <dbReference type="ChEBI" id="CHEBI:30616"/>
    </ligand>
</feature>
<feature type="binding site" evidence="1">
    <location>
        <position position="65"/>
    </location>
    <ligand>
        <name>ATP</name>
        <dbReference type="ChEBI" id="CHEBI:30616"/>
    </ligand>
</feature>
<feature type="binding site" evidence="1">
    <location>
        <position position="67"/>
    </location>
    <ligand>
        <name>ATP</name>
        <dbReference type="ChEBI" id="CHEBI:30616"/>
    </ligand>
</feature>
<feature type="binding site" evidence="1">
    <location>
        <position position="158"/>
    </location>
    <ligand>
        <name>ATP</name>
        <dbReference type="ChEBI" id="CHEBI:30616"/>
    </ligand>
</feature>
<feature type="binding site" evidence="1">
    <location>
        <position position="158"/>
    </location>
    <ligand>
        <name>Mg(2+)</name>
        <dbReference type="ChEBI" id="CHEBI:18420"/>
    </ligand>
</feature>
<feature type="binding site" evidence="6">
    <location>
        <position position="687"/>
    </location>
    <ligand>
        <name>Zn(2+)</name>
        <dbReference type="ChEBI" id="CHEBI:29105"/>
    </ligand>
</feature>
<feature type="binding site" evidence="6">
    <location>
        <position position="690"/>
    </location>
    <ligand>
        <name>Zn(2+)</name>
        <dbReference type="ChEBI" id="CHEBI:29105"/>
    </ligand>
</feature>
<feature type="modified residue" description="Phosphoserine" evidence="17">
    <location>
        <position position="469"/>
    </location>
</feature>
<feature type="modified residue" description="Phosphothreonine" evidence="17">
    <location>
        <position position="568"/>
    </location>
</feature>
<feature type="mutagenesis site" description="Does not affect dimerization but shows decreased DNA-binding." evidence="9">
    <original>K</original>
    <variation>E</variation>
    <location>
        <position position="60"/>
    </location>
</feature>
<feature type="mutagenesis site" description="In rad50-48; destabilization of the hook interface without affecting the ability to promote homologous recombination." evidence="10">
    <original>SCCY</original>
    <variation>RCCR</variation>
    <location>
        <begin position="685"/>
        <end position="688"/>
    </location>
</feature>
<feature type="mutagenesis site" description="Abolished ability to mediate DNA repair." evidence="9">
    <original>R</original>
    <variation>E</variation>
    <location>
        <position position="1201"/>
    </location>
</feature>
<feature type="mutagenesis site" description="Abolished ability to mediate DNA repair. Abolished ability to promote maintenance of telomeres." evidence="9">
    <original>S</original>
    <variation>R</variation>
    <location>
        <position position="1205"/>
    </location>
</feature>
<name>RAD50_YEAST</name>
<proteinExistence type="evidence at protein level"/>
<keyword id="KW-0002">3D-structure</keyword>
<keyword id="KW-0067">ATP-binding</keyword>
<keyword id="KW-0158">Chromosome</keyword>
<keyword id="KW-0175">Coiled coil</keyword>
<keyword id="KW-0227">DNA damage</keyword>
<keyword id="KW-0234">DNA repair</keyword>
<keyword id="KW-0378">Hydrolase</keyword>
<keyword id="KW-0460">Magnesium</keyword>
<keyword id="KW-0469">Meiosis</keyword>
<keyword id="KW-0479">Metal-binding</keyword>
<keyword id="KW-0547">Nucleotide-binding</keyword>
<keyword id="KW-0539">Nucleus</keyword>
<keyword id="KW-0597">Phosphoprotein</keyword>
<keyword id="KW-1185">Reference proteome</keyword>
<keyword id="KW-0862">Zinc</keyword>
<evidence type="ECO:0000250" key="1">
    <source>
        <dbReference type="UniProtKB" id="G0SHW7"/>
    </source>
</evidence>
<evidence type="ECO:0000250" key="2">
    <source>
        <dbReference type="UniProtKB" id="P58301"/>
    </source>
</evidence>
<evidence type="ECO:0000250" key="3">
    <source>
        <dbReference type="UniProtKB" id="Q92878"/>
    </source>
</evidence>
<evidence type="ECO:0000250" key="4">
    <source>
        <dbReference type="UniProtKB" id="Q9X1X1"/>
    </source>
</evidence>
<evidence type="ECO:0000255" key="5"/>
<evidence type="ECO:0000255" key="6">
    <source>
        <dbReference type="PROSITE-ProRule" id="PRU00471"/>
    </source>
</evidence>
<evidence type="ECO:0000269" key="7">
    <source>
    </source>
</evidence>
<evidence type="ECO:0000269" key="8">
    <source>
    </source>
</evidence>
<evidence type="ECO:0000269" key="9">
    <source>
    </source>
</evidence>
<evidence type="ECO:0000269" key="10">
    <source>
    </source>
</evidence>
<evidence type="ECO:0000269" key="11">
    <source>
    </source>
</evidence>
<evidence type="ECO:0000269" key="12">
    <source>
    </source>
</evidence>
<evidence type="ECO:0000269" key="13">
    <source>
    </source>
</evidence>
<evidence type="ECO:0000303" key="14">
    <source>
    </source>
</evidence>
<evidence type="ECO:0000305" key="15"/>
<evidence type="ECO:0000312" key="16">
    <source>
        <dbReference type="SGD" id="S000005194"/>
    </source>
</evidence>
<evidence type="ECO:0007744" key="17">
    <source>
    </source>
</evidence>
<dbReference type="EC" id="3.6.-.-" evidence="3"/>
<dbReference type="EMBL" id="X14814">
    <property type="protein sequence ID" value="CAA32919.1"/>
    <property type="molecule type" value="Genomic_DNA"/>
</dbReference>
<dbReference type="EMBL" id="X96722">
    <property type="protein sequence ID" value="CAA65494.1"/>
    <property type="molecule type" value="Genomic_DNA"/>
</dbReference>
<dbReference type="EMBL" id="Z71526">
    <property type="protein sequence ID" value="CAA96157.1"/>
    <property type="molecule type" value="Genomic_DNA"/>
</dbReference>
<dbReference type="EMBL" id="BK006947">
    <property type="protein sequence ID" value="DAA10309.1"/>
    <property type="molecule type" value="Genomic_DNA"/>
</dbReference>
<dbReference type="PIR" id="S05808">
    <property type="entry name" value="BWBYDL"/>
</dbReference>
<dbReference type="RefSeq" id="NP_014149.1">
    <property type="nucleotide sequence ID" value="NM_001183088.1"/>
</dbReference>
<dbReference type="PDB" id="9BI4">
    <property type="method" value="EM"/>
    <property type="resolution" value="3.20 A"/>
    <property type="chains" value="C/D=1-1312"/>
</dbReference>
<dbReference type="PDBsum" id="9BI4"/>
<dbReference type="EMDB" id="EMD-44558"/>
<dbReference type="SMR" id="P12753"/>
<dbReference type="BioGRID" id="35589">
    <property type="interactions" value="351"/>
</dbReference>
<dbReference type="ComplexPortal" id="CPX-1872">
    <property type="entry name" value="MRX double-strand break repair complex"/>
</dbReference>
<dbReference type="DIP" id="DIP-2419N"/>
<dbReference type="FunCoup" id="P12753">
    <property type="interactions" value="1209"/>
</dbReference>
<dbReference type="IntAct" id="P12753">
    <property type="interactions" value="44"/>
</dbReference>
<dbReference type="MINT" id="P12753"/>
<dbReference type="STRING" id="4932.YNL250W"/>
<dbReference type="iPTMnet" id="P12753"/>
<dbReference type="PaxDb" id="4932-YNL250W"/>
<dbReference type="PeptideAtlas" id="P12753"/>
<dbReference type="EnsemblFungi" id="YNL250W_mRNA">
    <property type="protein sequence ID" value="YNL250W"/>
    <property type="gene ID" value="YNL250W"/>
</dbReference>
<dbReference type="GeneID" id="855471"/>
<dbReference type="KEGG" id="sce:YNL250W"/>
<dbReference type="AGR" id="SGD:S000005194"/>
<dbReference type="SGD" id="S000005194">
    <property type="gene designation" value="RAD50"/>
</dbReference>
<dbReference type="VEuPathDB" id="FungiDB:YNL250W"/>
<dbReference type="eggNOG" id="KOG0962">
    <property type="taxonomic scope" value="Eukaryota"/>
</dbReference>
<dbReference type="GeneTree" id="ENSGT00390000018781"/>
<dbReference type="HOGENOM" id="CLU_006184_0_0_1"/>
<dbReference type="InParanoid" id="P12753"/>
<dbReference type="OMA" id="FSDYYYR"/>
<dbReference type="OrthoDB" id="18797at2759"/>
<dbReference type="BioCyc" id="YEAST:G3O-33247-MONOMER"/>
<dbReference type="Reactome" id="R-SCE-2559586">
    <property type="pathway name" value="DNA Damage/Telomere Stress Induced Senescence"/>
</dbReference>
<dbReference type="Reactome" id="R-SCE-5693548">
    <property type="pathway name" value="Sensing of DNA Double Strand Breaks"/>
</dbReference>
<dbReference type="Reactome" id="R-SCE-5693565">
    <property type="pathway name" value="Recruitment and ATM-mediated phosphorylation of repair and signaling proteins at DNA double strand breaks"/>
</dbReference>
<dbReference type="BioGRID-ORCS" id="855471">
    <property type="hits" value="5 hits in 10 CRISPR screens"/>
</dbReference>
<dbReference type="PRO" id="PR:P12753"/>
<dbReference type="Proteomes" id="UP000002311">
    <property type="component" value="Chromosome XIV"/>
</dbReference>
<dbReference type="RNAct" id="P12753">
    <property type="molecule type" value="protein"/>
</dbReference>
<dbReference type="GO" id="GO:0000794">
    <property type="term" value="C:condensed nuclear chromosome"/>
    <property type="evidence" value="ECO:0000318"/>
    <property type="project" value="GO_Central"/>
</dbReference>
<dbReference type="GO" id="GO:0005739">
    <property type="term" value="C:mitochondrion"/>
    <property type="evidence" value="ECO:0007005"/>
    <property type="project" value="SGD"/>
</dbReference>
<dbReference type="GO" id="GO:0030870">
    <property type="term" value="C:Mre11 complex"/>
    <property type="evidence" value="ECO:0000353"/>
    <property type="project" value="ComplexPortal"/>
</dbReference>
<dbReference type="GO" id="GO:0005654">
    <property type="term" value="C:nucleoplasm"/>
    <property type="evidence" value="ECO:0000304"/>
    <property type="project" value="Reactome"/>
</dbReference>
<dbReference type="GO" id="GO:0005634">
    <property type="term" value="C:nucleus"/>
    <property type="evidence" value="ECO:0000314"/>
    <property type="project" value="ComplexPortal"/>
</dbReference>
<dbReference type="GO" id="GO:0004017">
    <property type="term" value="F:adenylate kinase activity"/>
    <property type="evidence" value="ECO:0000314"/>
    <property type="project" value="SGD"/>
</dbReference>
<dbReference type="GO" id="GO:0005524">
    <property type="term" value="F:ATP binding"/>
    <property type="evidence" value="ECO:0007669"/>
    <property type="project" value="UniProtKB-KW"/>
</dbReference>
<dbReference type="GO" id="GO:0016887">
    <property type="term" value="F:ATP hydrolysis activity"/>
    <property type="evidence" value="ECO:0000314"/>
    <property type="project" value="SGD"/>
</dbReference>
<dbReference type="GO" id="GO:0003690">
    <property type="term" value="F:double-stranded DNA binding"/>
    <property type="evidence" value="ECO:0000314"/>
    <property type="project" value="SGD"/>
</dbReference>
<dbReference type="GO" id="GO:0003691">
    <property type="term" value="F:double-stranded telomeric DNA binding"/>
    <property type="evidence" value="ECO:0000314"/>
    <property type="project" value="SGD"/>
</dbReference>
<dbReference type="GO" id="GO:0051880">
    <property type="term" value="F:G-quadruplex DNA binding"/>
    <property type="evidence" value="ECO:0000314"/>
    <property type="project" value="SGD"/>
</dbReference>
<dbReference type="GO" id="GO:0046872">
    <property type="term" value="F:metal ion binding"/>
    <property type="evidence" value="ECO:0007669"/>
    <property type="project" value="UniProtKB-KW"/>
</dbReference>
<dbReference type="GO" id="GO:0043047">
    <property type="term" value="F:single-stranded telomeric DNA binding"/>
    <property type="evidence" value="ECO:0000314"/>
    <property type="project" value="SGD"/>
</dbReference>
<dbReference type="GO" id="GO:0042162">
    <property type="term" value="F:telomeric DNA binding"/>
    <property type="evidence" value="ECO:0000314"/>
    <property type="project" value="SGD"/>
</dbReference>
<dbReference type="GO" id="GO:0006284">
    <property type="term" value="P:base-excision repair"/>
    <property type="evidence" value="ECO:0000315"/>
    <property type="project" value="SGD"/>
</dbReference>
<dbReference type="GO" id="GO:0070192">
    <property type="term" value="P:chromosome organization involved in meiotic cell cycle"/>
    <property type="evidence" value="ECO:0000318"/>
    <property type="project" value="GO_Central"/>
</dbReference>
<dbReference type="GO" id="GO:0006302">
    <property type="term" value="P:double-strand break repair"/>
    <property type="evidence" value="ECO:0000314"/>
    <property type="project" value="UniProtKB"/>
</dbReference>
<dbReference type="GO" id="GO:0006303">
    <property type="term" value="P:double-strand break repair via nonhomologous end joining"/>
    <property type="evidence" value="ECO:0000315"/>
    <property type="project" value="SGD"/>
</dbReference>
<dbReference type="GO" id="GO:0007129">
    <property type="term" value="P:homologous chromosome pairing at meiosis"/>
    <property type="evidence" value="ECO:0000315"/>
    <property type="project" value="SGD"/>
</dbReference>
<dbReference type="GO" id="GO:0035753">
    <property type="term" value="P:maintenance of DNA trinucleotide repeats"/>
    <property type="evidence" value="ECO:0000315"/>
    <property type="project" value="SGD"/>
</dbReference>
<dbReference type="GO" id="GO:0051321">
    <property type="term" value="P:meiotic cell cycle"/>
    <property type="evidence" value="ECO:0000315"/>
    <property type="project" value="SGD"/>
</dbReference>
<dbReference type="GO" id="GO:0042138">
    <property type="term" value="P:meiotic DNA double-strand break formation"/>
    <property type="evidence" value="ECO:0000303"/>
    <property type="project" value="ComplexPortal"/>
</dbReference>
<dbReference type="GO" id="GO:0097552">
    <property type="term" value="P:mitochondrial double-strand break repair via homologous recombination"/>
    <property type="evidence" value="ECO:0000315"/>
    <property type="project" value="SGD"/>
</dbReference>
<dbReference type="GO" id="GO:0062176">
    <property type="term" value="P:R-loop processing"/>
    <property type="evidence" value="ECO:0000314"/>
    <property type="project" value="UniProtKB"/>
</dbReference>
<dbReference type="GO" id="GO:0000723">
    <property type="term" value="P:telomere maintenance"/>
    <property type="evidence" value="ECO:0000315"/>
    <property type="project" value="SGD"/>
</dbReference>
<dbReference type="GO" id="GO:0000722">
    <property type="term" value="P:telomere maintenance via recombination"/>
    <property type="evidence" value="ECO:0000315"/>
    <property type="project" value="UniProtKB"/>
</dbReference>
<dbReference type="GO" id="GO:0007004">
    <property type="term" value="P:telomere maintenance via telomerase"/>
    <property type="evidence" value="ECO:0000318"/>
    <property type="project" value="GO_Central"/>
</dbReference>
<dbReference type="FunFam" id="3.40.50.300:FF:000593">
    <property type="entry name" value="DNA repair protein RAD50"/>
    <property type="match status" value="1"/>
</dbReference>
<dbReference type="FunFam" id="3.40.50.300:FF:001195">
    <property type="entry name" value="DNA repair protein rad50"/>
    <property type="match status" value="1"/>
</dbReference>
<dbReference type="Gene3D" id="3.40.50.300">
    <property type="entry name" value="P-loop containing nucleotide triphosphate hydrolases"/>
    <property type="match status" value="2"/>
</dbReference>
<dbReference type="InterPro" id="IPR027417">
    <property type="entry name" value="P-loop_NTPase"/>
</dbReference>
<dbReference type="InterPro" id="IPR038729">
    <property type="entry name" value="Rad50/SbcC_AAA"/>
</dbReference>
<dbReference type="InterPro" id="IPR004584">
    <property type="entry name" value="Rad50_eukaryotes"/>
</dbReference>
<dbReference type="InterPro" id="IPR013134">
    <property type="entry name" value="Zn_hook_RAD50"/>
</dbReference>
<dbReference type="NCBIfam" id="TIGR00606">
    <property type="entry name" value="rad50"/>
    <property type="match status" value="1"/>
</dbReference>
<dbReference type="PANTHER" id="PTHR18867:SF12">
    <property type="entry name" value="DNA REPAIR PROTEIN RAD50"/>
    <property type="match status" value="1"/>
</dbReference>
<dbReference type="PANTHER" id="PTHR18867">
    <property type="entry name" value="RAD50"/>
    <property type="match status" value="1"/>
</dbReference>
<dbReference type="Pfam" id="PF13476">
    <property type="entry name" value="AAA_23"/>
    <property type="match status" value="1"/>
</dbReference>
<dbReference type="Pfam" id="PF04423">
    <property type="entry name" value="Rad50_zn_hook"/>
    <property type="match status" value="1"/>
</dbReference>
<dbReference type="Pfam" id="PF13558">
    <property type="entry name" value="SbcC_Walker_B"/>
    <property type="match status" value="1"/>
</dbReference>
<dbReference type="SUPFAM" id="SSF52540">
    <property type="entry name" value="P-loop containing nucleoside triphosphate hydrolases"/>
    <property type="match status" value="1"/>
</dbReference>
<dbReference type="PROSITE" id="PS51131">
    <property type="entry name" value="ZN_HOOK"/>
    <property type="match status" value="1"/>
</dbReference>